<accession>Q6QNZ6</accession>
<gene>
    <name evidence="1" type="primary">rlmM</name>
</gene>
<feature type="chain" id="PRO_0000070414" description="Ribosomal RNA large subunit methyltransferase M">
    <location>
        <begin position="1"/>
        <end position="366"/>
    </location>
</feature>
<feature type="active site" description="Proton acceptor" evidence="1">
    <location>
        <position position="306"/>
    </location>
</feature>
<feature type="binding site" evidence="1">
    <location>
        <position position="188"/>
    </location>
    <ligand>
        <name>S-adenosyl-L-methionine</name>
        <dbReference type="ChEBI" id="CHEBI:59789"/>
    </ligand>
</feature>
<feature type="binding site" evidence="1">
    <location>
        <begin position="221"/>
        <end position="224"/>
    </location>
    <ligand>
        <name>S-adenosyl-L-methionine</name>
        <dbReference type="ChEBI" id="CHEBI:59789"/>
    </ligand>
</feature>
<feature type="binding site" evidence="1">
    <location>
        <position position="240"/>
    </location>
    <ligand>
        <name>S-adenosyl-L-methionine</name>
        <dbReference type="ChEBI" id="CHEBI:59789"/>
    </ligand>
</feature>
<feature type="binding site" evidence="1">
    <location>
        <position position="260"/>
    </location>
    <ligand>
        <name>S-adenosyl-L-methionine</name>
        <dbReference type="ChEBI" id="CHEBI:59789"/>
    </ligand>
</feature>
<feature type="binding site" evidence="1">
    <location>
        <position position="277"/>
    </location>
    <ligand>
        <name>S-adenosyl-L-methionine</name>
        <dbReference type="ChEBI" id="CHEBI:59789"/>
    </ligand>
</feature>
<organism>
    <name type="scientific">Photorhabdus sp. (strain Az29)</name>
    <dbReference type="NCBI Taxonomy" id="229779"/>
    <lineage>
        <taxon>Bacteria</taxon>
        <taxon>Pseudomonadati</taxon>
        <taxon>Pseudomonadota</taxon>
        <taxon>Gammaproteobacteria</taxon>
        <taxon>Enterobacterales</taxon>
        <taxon>Morganellaceae</taxon>
        <taxon>Photorhabdus</taxon>
    </lineage>
</organism>
<dbReference type="EC" id="2.1.1.186" evidence="1"/>
<dbReference type="EMBL" id="AY531111">
    <property type="protein sequence ID" value="AAS19408.1"/>
    <property type="molecule type" value="Genomic_DNA"/>
</dbReference>
<dbReference type="SMR" id="Q6QNZ6"/>
<dbReference type="GO" id="GO:0005737">
    <property type="term" value="C:cytoplasm"/>
    <property type="evidence" value="ECO:0007669"/>
    <property type="project" value="UniProtKB-SubCell"/>
</dbReference>
<dbReference type="GO" id="GO:0008757">
    <property type="term" value="F:S-adenosylmethionine-dependent methyltransferase activity"/>
    <property type="evidence" value="ECO:0007669"/>
    <property type="project" value="UniProtKB-UniRule"/>
</dbReference>
<dbReference type="GO" id="GO:0032259">
    <property type="term" value="P:methylation"/>
    <property type="evidence" value="ECO:0007669"/>
    <property type="project" value="UniProtKB-KW"/>
</dbReference>
<dbReference type="GO" id="GO:0006364">
    <property type="term" value="P:rRNA processing"/>
    <property type="evidence" value="ECO:0007669"/>
    <property type="project" value="UniProtKB-UniRule"/>
</dbReference>
<dbReference type="Gene3D" id="3.30.2300.20">
    <property type="match status" value="1"/>
</dbReference>
<dbReference type="Gene3D" id="3.30.70.2810">
    <property type="match status" value="1"/>
</dbReference>
<dbReference type="Gene3D" id="3.40.50.150">
    <property type="entry name" value="Vaccinia Virus protein VP39"/>
    <property type="match status" value="1"/>
</dbReference>
<dbReference type="HAMAP" id="MF_01551">
    <property type="entry name" value="23SrRNA_methyltr_M"/>
    <property type="match status" value="1"/>
</dbReference>
<dbReference type="InterPro" id="IPR040739">
    <property type="entry name" value="RlmM_FDX"/>
</dbReference>
<dbReference type="InterPro" id="IPR048646">
    <property type="entry name" value="RlmM_THUMP-like"/>
</dbReference>
<dbReference type="InterPro" id="IPR002877">
    <property type="entry name" value="RNA_MeTrfase_FtsJ_dom"/>
</dbReference>
<dbReference type="InterPro" id="IPR011224">
    <property type="entry name" value="rRNA_MeTrfase_M"/>
</dbReference>
<dbReference type="InterPro" id="IPR029063">
    <property type="entry name" value="SAM-dependent_MTases_sf"/>
</dbReference>
<dbReference type="NCBIfam" id="NF008734">
    <property type="entry name" value="PRK11760.1"/>
    <property type="match status" value="1"/>
</dbReference>
<dbReference type="PANTHER" id="PTHR37524">
    <property type="entry name" value="RIBOSOMAL RNA LARGE SUBUNIT METHYLTRANSFERASE M"/>
    <property type="match status" value="1"/>
</dbReference>
<dbReference type="PANTHER" id="PTHR37524:SF2">
    <property type="entry name" value="RIBOSOMAL RNA METHYLTRANSFERASE FTSJ DOMAIN-CONTAINING PROTEIN"/>
    <property type="match status" value="1"/>
</dbReference>
<dbReference type="Pfam" id="PF01728">
    <property type="entry name" value="FtsJ"/>
    <property type="match status" value="1"/>
</dbReference>
<dbReference type="Pfam" id="PF18125">
    <property type="entry name" value="RlmM_FDX"/>
    <property type="match status" value="1"/>
</dbReference>
<dbReference type="Pfam" id="PF21239">
    <property type="entry name" value="RLMM_N"/>
    <property type="match status" value="1"/>
</dbReference>
<dbReference type="PIRSF" id="PIRSF028774">
    <property type="entry name" value="UCP028774"/>
    <property type="match status" value="1"/>
</dbReference>
<dbReference type="SUPFAM" id="SSF53335">
    <property type="entry name" value="S-adenosyl-L-methionine-dependent methyltransferases"/>
    <property type="match status" value="1"/>
</dbReference>
<name>RLMM_PHOAZ</name>
<keyword id="KW-0963">Cytoplasm</keyword>
<keyword id="KW-0489">Methyltransferase</keyword>
<keyword id="KW-0698">rRNA processing</keyword>
<keyword id="KW-0949">S-adenosyl-L-methionine</keyword>
<keyword id="KW-0808">Transferase</keyword>
<sequence length="366" mass="42393">MNKIALYCRPGFEKECAAEITDKAGQKEIYGFARVKDNSGYVLFECYQHEDADRLIREIPFRELIFARQMLVVGELLRDLSPEDRISPIIGMLQGVMERAGELRVEVPDTNESKELLKFCRKFTVPLRNAMRQEKILLIRENANRPVIHVFFIAPGCCYVGYSYSNNNSPFYMGIPRLKFPSDAPSRSTLKLEEAFHVFIPYDEWEERLASGLYAVDLGACPGGWTYQLVKRSMMVHAVDNGPMSESLMDTGQVKHHKVDGFKFVPSTKNIYWLVCDMVEKPAKVTQLMADWLVNGWCREAIFNLKLPMKKRYEEVAHNLQKMHLQLKENGINAQIQAKHLYHDREEITVHVRRIWSAYAANRDDY</sequence>
<comment type="function">
    <text evidence="1">Catalyzes the 2'-O-methylation at nucleotide C2498 in 23S rRNA.</text>
</comment>
<comment type="catalytic activity">
    <reaction evidence="1">
        <text>cytidine(2498) in 23S rRNA + S-adenosyl-L-methionine = 2'-O-methylcytidine(2498) in 23S rRNA + S-adenosyl-L-homocysteine + H(+)</text>
        <dbReference type="Rhea" id="RHEA:42788"/>
        <dbReference type="Rhea" id="RHEA-COMP:10244"/>
        <dbReference type="Rhea" id="RHEA-COMP:10245"/>
        <dbReference type="ChEBI" id="CHEBI:15378"/>
        <dbReference type="ChEBI" id="CHEBI:57856"/>
        <dbReference type="ChEBI" id="CHEBI:59789"/>
        <dbReference type="ChEBI" id="CHEBI:74495"/>
        <dbReference type="ChEBI" id="CHEBI:82748"/>
        <dbReference type="EC" id="2.1.1.186"/>
    </reaction>
</comment>
<comment type="subunit">
    <text evidence="1">Monomer.</text>
</comment>
<comment type="subcellular location">
    <subcellularLocation>
        <location evidence="1">Cytoplasm</location>
    </subcellularLocation>
</comment>
<comment type="similarity">
    <text evidence="1">Belongs to the class I-like SAM-binding methyltransferase superfamily. RNA methyltransferase RlmE family. RlmM subfamily.</text>
</comment>
<reference key="1">
    <citation type="submission" date="2004-01" db="EMBL/GenBank/DDBJ databases">
        <title>Cloning and sequencing of the gene for a metalloprotease with an ABC transport system: a protease secreted by Photorhabdus sp. Az29 involved in the inhibition of insect antibacterial peptides.</title>
        <authorList>
            <person name="Cabral C.M."/>
            <person name="Montiel R."/>
            <person name="Simoes N."/>
        </authorList>
    </citation>
    <scope>NUCLEOTIDE SEQUENCE [GENOMIC DNA]</scope>
</reference>
<proteinExistence type="inferred from homology"/>
<evidence type="ECO:0000255" key="1">
    <source>
        <dbReference type="HAMAP-Rule" id="MF_01551"/>
    </source>
</evidence>
<protein>
    <recommendedName>
        <fullName evidence="1">Ribosomal RNA large subunit methyltransferase M</fullName>
        <ecNumber evidence="1">2.1.1.186</ecNumber>
    </recommendedName>
    <alternativeName>
        <fullName evidence="1">23S rRNA (cytidine2498-2'-O)-methyltransferase</fullName>
    </alternativeName>
    <alternativeName>
        <fullName evidence="1">23S rRNA 2'-O-ribose methyltransferase RlmM</fullName>
    </alternativeName>
</protein>